<reference key="1">
    <citation type="journal article" date="2008" name="J. Bacteriol.">
        <title>Comparative genome sequence analysis of multidrug-resistant Acinetobacter baumannii.</title>
        <authorList>
            <person name="Adams M.D."/>
            <person name="Goglin K."/>
            <person name="Molyneaux N."/>
            <person name="Hujer K.M."/>
            <person name="Lavender H."/>
            <person name="Jamison J.J."/>
            <person name="MacDonald I.J."/>
            <person name="Martin K.M."/>
            <person name="Russo T."/>
            <person name="Campagnari A.A."/>
            <person name="Hujer A.M."/>
            <person name="Bonomo R.A."/>
            <person name="Gill S.R."/>
        </authorList>
    </citation>
    <scope>NUCLEOTIDE SEQUENCE [LARGE SCALE GENOMIC DNA]</scope>
    <source>
        <strain>AB0057</strain>
    </source>
</reference>
<accession>B7IA88</accession>
<organism>
    <name type="scientific">Acinetobacter baumannii (strain AB0057)</name>
    <dbReference type="NCBI Taxonomy" id="480119"/>
    <lineage>
        <taxon>Bacteria</taxon>
        <taxon>Pseudomonadati</taxon>
        <taxon>Pseudomonadota</taxon>
        <taxon>Gammaproteobacteria</taxon>
        <taxon>Moraxellales</taxon>
        <taxon>Moraxellaceae</taxon>
        <taxon>Acinetobacter</taxon>
        <taxon>Acinetobacter calcoaceticus/baumannii complex</taxon>
    </lineage>
</organism>
<keyword id="KW-0056">Arginine metabolism</keyword>
<keyword id="KW-0378">Hydrolase</keyword>
<keyword id="KW-0479">Metal-binding</keyword>
<keyword id="KW-0862">Zinc</keyword>
<sequence length="324" mass="36092">MQDFLALTLQGEQPATREGKQANFSWRWLGEGLLECTPHAQYDKAVVLSAGVHGNETAPIELLSHLCTDLFAGRLKLAVRLLLVLGNPYAMRQGKRYVHDDVNRMFCGGYKNLPVTEESKRAEVLEQTVATFFQESSSQAKRYHYDLHTAIRASLLPTFALFPYQTHGYDADLTASLEAADLDALVYHNALGKTFTHFTSENFKAASATLELGKALPFGQNDLSQFASIDEVIRNVVSEQALPVRNKPKIRVFQVSDSLIKKDEEFHMNLSAEAPNFSTFTKGEIIATQPSGNYVVEQDQVWILFPNPNVKIGLRAGLVLTETI</sequence>
<feature type="chain" id="PRO_1000133619" description="Succinylglutamate desuccinylase">
    <location>
        <begin position="1"/>
        <end position="324"/>
    </location>
</feature>
<feature type="active site" evidence="1">
    <location>
        <position position="211"/>
    </location>
</feature>
<feature type="binding site" evidence="1">
    <location>
        <position position="53"/>
    </location>
    <ligand>
        <name>Zn(2+)</name>
        <dbReference type="ChEBI" id="CHEBI:29105"/>
    </ligand>
</feature>
<feature type="binding site" evidence="1">
    <location>
        <position position="56"/>
    </location>
    <ligand>
        <name>Zn(2+)</name>
        <dbReference type="ChEBI" id="CHEBI:29105"/>
    </ligand>
</feature>
<feature type="binding site" evidence="1">
    <location>
        <position position="148"/>
    </location>
    <ligand>
        <name>Zn(2+)</name>
        <dbReference type="ChEBI" id="CHEBI:29105"/>
    </ligand>
</feature>
<evidence type="ECO:0000255" key="1">
    <source>
        <dbReference type="HAMAP-Rule" id="MF_00767"/>
    </source>
</evidence>
<gene>
    <name evidence="1" type="primary">astE</name>
    <name type="ordered locus">AB57_3583</name>
</gene>
<dbReference type="EC" id="3.5.1.96" evidence="1"/>
<dbReference type="EMBL" id="CP001182">
    <property type="protein sequence ID" value="ACJ42946.1"/>
    <property type="molecule type" value="Genomic_DNA"/>
</dbReference>
<dbReference type="RefSeq" id="WP_001150816.1">
    <property type="nucleotide sequence ID" value="NC_011586.2"/>
</dbReference>
<dbReference type="SMR" id="B7IA88"/>
<dbReference type="KEGG" id="abn:AB57_3583"/>
<dbReference type="HOGENOM" id="CLU_071608_0_0_6"/>
<dbReference type="UniPathway" id="UPA00185">
    <property type="reaction ID" value="UER00283"/>
</dbReference>
<dbReference type="Proteomes" id="UP000007094">
    <property type="component" value="Chromosome"/>
</dbReference>
<dbReference type="GO" id="GO:0016788">
    <property type="term" value="F:hydrolase activity, acting on ester bonds"/>
    <property type="evidence" value="ECO:0007669"/>
    <property type="project" value="UniProtKB-UniRule"/>
</dbReference>
<dbReference type="GO" id="GO:0009017">
    <property type="term" value="F:succinylglutamate desuccinylase activity"/>
    <property type="evidence" value="ECO:0007669"/>
    <property type="project" value="UniProtKB-EC"/>
</dbReference>
<dbReference type="GO" id="GO:0008270">
    <property type="term" value="F:zinc ion binding"/>
    <property type="evidence" value="ECO:0007669"/>
    <property type="project" value="UniProtKB-UniRule"/>
</dbReference>
<dbReference type="GO" id="GO:0019544">
    <property type="term" value="P:arginine catabolic process to glutamate"/>
    <property type="evidence" value="ECO:0007669"/>
    <property type="project" value="UniProtKB-UniRule"/>
</dbReference>
<dbReference type="GO" id="GO:0019545">
    <property type="term" value="P:arginine catabolic process to succinate"/>
    <property type="evidence" value="ECO:0007669"/>
    <property type="project" value="UniProtKB-UniRule"/>
</dbReference>
<dbReference type="CDD" id="cd03855">
    <property type="entry name" value="M14_ASTE"/>
    <property type="match status" value="1"/>
</dbReference>
<dbReference type="Gene3D" id="3.40.630.10">
    <property type="entry name" value="Zn peptidases"/>
    <property type="match status" value="1"/>
</dbReference>
<dbReference type="HAMAP" id="MF_00767">
    <property type="entry name" value="Arg_catab_AstE"/>
    <property type="match status" value="1"/>
</dbReference>
<dbReference type="InterPro" id="IPR050178">
    <property type="entry name" value="AspA/AstE_fam"/>
</dbReference>
<dbReference type="InterPro" id="IPR055438">
    <property type="entry name" value="AstE_AspA_cat"/>
</dbReference>
<dbReference type="InterPro" id="IPR007036">
    <property type="entry name" value="Aste_AspA_hybrid_dom"/>
</dbReference>
<dbReference type="InterPro" id="IPR016681">
    <property type="entry name" value="SuccinylGlu_desuccinylase"/>
</dbReference>
<dbReference type="NCBIfam" id="TIGR03242">
    <property type="entry name" value="arg_catab_astE"/>
    <property type="match status" value="1"/>
</dbReference>
<dbReference type="NCBIfam" id="NF003706">
    <property type="entry name" value="PRK05324.1"/>
    <property type="match status" value="1"/>
</dbReference>
<dbReference type="PANTHER" id="PTHR15162">
    <property type="entry name" value="ASPARTOACYLASE"/>
    <property type="match status" value="1"/>
</dbReference>
<dbReference type="PANTHER" id="PTHR15162:SF7">
    <property type="entry name" value="SUCCINYLGLUTAMATE DESUCCINYLASE"/>
    <property type="match status" value="1"/>
</dbReference>
<dbReference type="Pfam" id="PF24827">
    <property type="entry name" value="AstE_AspA_cat"/>
    <property type="match status" value="1"/>
</dbReference>
<dbReference type="Pfam" id="PF04952">
    <property type="entry name" value="AstE_AspA_hybrid"/>
    <property type="match status" value="1"/>
</dbReference>
<dbReference type="PIRSF" id="PIRSF017020">
    <property type="entry name" value="AstE"/>
    <property type="match status" value="1"/>
</dbReference>
<dbReference type="SUPFAM" id="SSF53187">
    <property type="entry name" value="Zn-dependent exopeptidases"/>
    <property type="match status" value="1"/>
</dbReference>
<proteinExistence type="inferred from homology"/>
<comment type="function">
    <text evidence="1">Transforms N(2)-succinylglutamate into succinate and glutamate.</text>
</comment>
<comment type="catalytic activity">
    <reaction evidence="1">
        <text>N-succinyl-L-glutamate + H2O = L-glutamate + succinate</text>
        <dbReference type="Rhea" id="RHEA:15169"/>
        <dbReference type="ChEBI" id="CHEBI:15377"/>
        <dbReference type="ChEBI" id="CHEBI:29985"/>
        <dbReference type="ChEBI" id="CHEBI:30031"/>
        <dbReference type="ChEBI" id="CHEBI:58763"/>
        <dbReference type="EC" id="3.5.1.96"/>
    </reaction>
</comment>
<comment type="cofactor">
    <cofactor evidence="1">
        <name>Zn(2+)</name>
        <dbReference type="ChEBI" id="CHEBI:29105"/>
    </cofactor>
    <text evidence="1">Binds 1 zinc ion per subunit.</text>
</comment>
<comment type="pathway">
    <text evidence="1">Amino-acid degradation; L-arginine degradation via AST pathway; L-glutamate and succinate from L-arginine: step 5/5.</text>
</comment>
<comment type="similarity">
    <text evidence="1">Belongs to the AspA/AstE family. Succinylglutamate desuccinylase subfamily.</text>
</comment>
<name>ASTE_ACIB5</name>
<protein>
    <recommendedName>
        <fullName evidence="1">Succinylglutamate desuccinylase</fullName>
        <ecNumber evidence="1">3.5.1.96</ecNumber>
    </recommendedName>
</protein>